<geneLocation type="chloroplast"/>
<feature type="propeptide" id="PRO_0000031321" evidence="1">
    <location>
        <begin position="1"/>
        <end position="2"/>
    </location>
</feature>
<feature type="chain" id="PRO_0000031322" description="Ribulose bisphosphate carboxylase large chain">
    <location>
        <begin position="3"/>
        <end position="477"/>
    </location>
</feature>
<feature type="active site" description="Proton acceptor" evidence="1">
    <location>
        <position position="175"/>
    </location>
</feature>
<feature type="active site" description="Proton acceptor" evidence="1">
    <location>
        <position position="294"/>
    </location>
</feature>
<feature type="binding site" description="in homodimeric partner" evidence="1">
    <location>
        <position position="123"/>
    </location>
    <ligand>
        <name>substrate</name>
    </ligand>
</feature>
<feature type="binding site" evidence="1">
    <location>
        <position position="173"/>
    </location>
    <ligand>
        <name>substrate</name>
    </ligand>
</feature>
<feature type="binding site" evidence="1">
    <location>
        <position position="177"/>
    </location>
    <ligand>
        <name>substrate</name>
    </ligand>
</feature>
<feature type="binding site" description="via carbamate group" evidence="1">
    <location>
        <position position="201"/>
    </location>
    <ligand>
        <name>Mg(2+)</name>
        <dbReference type="ChEBI" id="CHEBI:18420"/>
    </ligand>
</feature>
<feature type="binding site" evidence="1">
    <location>
        <position position="203"/>
    </location>
    <ligand>
        <name>Mg(2+)</name>
        <dbReference type="ChEBI" id="CHEBI:18420"/>
    </ligand>
</feature>
<feature type="binding site" evidence="1">
    <location>
        <position position="204"/>
    </location>
    <ligand>
        <name>Mg(2+)</name>
        <dbReference type="ChEBI" id="CHEBI:18420"/>
    </ligand>
</feature>
<feature type="binding site" evidence="1">
    <location>
        <position position="295"/>
    </location>
    <ligand>
        <name>substrate</name>
    </ligand>
</feature>
<feature type="binding site" evidence="1">
    <location>
        <position position="327"/>
    </location>
    <ligand>
        <name>substrate</name>
    </ligand>
</feature>
<feature type="binding site" evidence="1">
    <location>
        <position position="379"/>
    </location>
    <ligand>
        <name>substrate</name>
    </ligand>
</feature>
<feature type="site" description="Transition state stabilizer" evidence="1">
    <location>
        <position position="334"/>
    </location>
</feature>
<feature type="modified residue" description="N-acetylproline" evidence="1">
    <location>
        <position position="3"/>
    </location>
</feature>
<feature type="modified residue" description="N6,N6,N6-trimethyllysine" evidence="1">
    <location>
        <position position="14"/>
    </location>
</feature>
<feature type="modified residue" description="N6-carboxylysine" evidence="1">
    <location>
        <position position="201"/>
    </location>
</feature>
<feature type="disulfide bond" description="Interchain; in linked form" evidence="1">
    <location>
        <position position="247"/>
    </location>
</feature>
<protein>
    <recommendedName>
        <fullName evidence="1">Ribulose bisphosphate carboxylase large chain</fullName>
        <shortName evidence="1">RuBisCO large subunit</shortName>
        <ecNumber evidence="1">4.1.1.39</ecNumber>
    </recommendedName>
</protein>
<comment type="function">
    <text evidence="1">RuBisCO catalyzes two reactions: the carboxylation of D-ribulose 1,5-bisphosphate, the primary event in carbon dioxide fixation, as well as the oxidative fragmentation of the pentose substrate in the photorespiration process. Both reactions occur simultaneously and in competition at the same active site.</text>
</comment>
<comment type="catalytic activity">
    <reaction evidence="1">
        <text>2 (2R)-3-phosphoglycerate + 2 H(+) = D-ribulose 1,5-bisphosphate + CO2 + H2O</text>
        <dbReference type="Rhea" id="RHEA:23124"/>
        <dbReference type="ChEBI" id="CHEBI:15377"/>
        <dbReference type="ChEBI" id="CHEBI:15378"/>
        <dbReference type="ChEBI" id="CHEBI:16526"/>
        <dbReference type="ChEBI" id="CHEBI:57870"/>
        <dbReference type="ChEBI" id="CHEBI:58272"/>
        <dbReference type="EC" id="4.1.1.39"/>
    </reaction>
</comment>
<comment type="catalytic activity">
    <reaction evidence="1">
        <text>D-ribulose 1,5-bisphosphate + O2 = 2-phosphoglycolate + (2R)-3-phosphoglycerate + 2 H(+)</text>
        <dbReference type="Rhea" id="RHEA:36631"/>
        <dbReference type="ChEBI" id="CHEBI:15378"/>
        <dbReference type="ChEBI" id="CHEBI:15379"/>
        <dbReference type="ChEBI" id="CHEBI:57870"/>
        <dbReference type="ChEBI" id="CHEBI:58033"/>
        <dbReference type="ChEBI" id="CHEBI:58272"/>
    </reaction>
</comment>
<comment type="cofactor">
    <cofactor evidence="1">
        <name>Mg(2+)</name>
        <dbReference type="ChEBI" id="CHEBI:18420"/>
    </cofactor>
    <text evidence="1">Binds 1 Mg(2+) ion per subunit.</text>
</comment>
<comment type="subunit">
    <text evidence="1">Heterohexadecamer of 8 large chains and 8 small chains; disulfide-linked. The disulfide link is formed within the large subunit homodimers.</text>
</comment>
<comment type="subcellular location">
    <subcellularLocation>
        <location>Plastid</location>
        <location>Chloroplast</location>
    </subcellularLocation>
</comment>
<comment type="PTM">
    <text evidence="1">The disulfide bond which can form in the large chain dimeric partners within the hexadecamer appears to be associated with oxidative stress and protein turnover.</text>
</comment>
<comment type="miscellaneous">
    <text evidence="1">The basic functional RuBisCO is composed of a large chain homodimer in a 'head-to-tail' conformation. In form I RuBisCO this homodimer is arranged in a barrel-like tetramer with the small subunits forming a tetrameric 'cap' on each end of the 'barrel'.</text>
</comment>
<comment type="similarity">
    <text evidence="1">Belongs to the RuBisCO large chain family. Type I subfamily.</text>
</comment>
<dbReference type="EC" id="4.1.1.39" evidence="1"/>
<dbReference type="EMBL" id="D70815">
    <property type="protein sequence ID" value="BAA11095.1"/>
    <property type="molecule type" value="Genomic_DNA"/>
</dbReference>
<dbReference type="SMR" id="P48709"/>
<dbReference type="GO" id="GO:0009507">
    <property type="term" value="C:chloroplast"/>
    <property type="evidence" value="ECO:0007669"/>
    <property type="project" value="UniProtKB-SubCell"/>
</dbReference>
<dbReference type="GO" id="GO:0000287">
    <property type="term" value="F:magnesium ion binding"/>
    <property type="evidence" value="ECO:0007669"/>
    <property type="project" value="UniProtKB-UniRule"/>
</dbReference>
<dbReference type="GO" id="GO:0004497">
    <property type="term" value="F:monooxygenase activity"/>
    <property type="evidence" value="ECO:0007669"/>
    <property type="project" value="UniProtKB-KW"/>
</dbReference>
<dbReference type="GO" id="GO:0016984">
    <property type="term" value="F:ribulose-bisphosphate carboxylase activity"/>
    <property type="evidence" value="ECO:0007669"/>
    <property type="project" value="UniProtKB-UniRule"/>
</dbReference>
<dbReference type="GO" id="GO:0009853">
    <property type="term" value="P:photorespiration"/>
    <property type="evidence" value="ECO:0007669"/>
    <property type="project" value="UniProtKB-KW"/>
</dbReference>
<dbReference type="GO" id="GO:0019253">
    <property type="term" value="P:reductive pentose-phosphate cycle"/>
    <property type="evidence" value="ECO:0007669"/>
    <property type="project" value="UniProtKB-UniRule"/>
</dbReference>
<dbReference type="CDD" id="cd08212">
    <property type="entry name" value="RuBisCO_large_I"/>
    <property type="match status" value="1"/>
</dbReference>
<dbReference type="FunFam" id="3.20.20.110:FF:000001">
    <property type="entry name" value="Ribulose bisphosphate carboxylase large chain"/>
    <property type="match status" value="1"/>
</dbReference>
<dbReference type="FunFam" id="3.30.70.150:FF:000001">
    <property type="entry name" value="Ribulose bisphosphate carboxylase large chain"/>
    <property type="match status" value="1"/>
</dbReference>
<dbReference type="Gene3D" id="3.20.20.110">
    <property type="entry name" value="Ribulose bisphosphate carboxylase, large subunit, C-terminal domain"/>
    <property type="match status" value="1"/>
</dbReference>
<dbReference type="Gene3D" id="3.30.70.150">
    <property type="entry name" value="RuBisCO large subunit, N-terminal domain"/>
    <property type="match status" value="1"/>
</dbReference>
<dbReference type="HAMAP" id="MF_01338">
    <property type="entry name" value="RuBisCO_L_type1"/>
    <property type="match status" value="1"/>
</dbReference>
<dbReference type="InterPro" id="IPR033966">
    <property type="entry name" value="RuBisCO"/>
</dbReference>
<dbReference type="InterPro" id="IPR020878">
    <property type="entry name" value="RuBisCo_large_chain_AS"/>
</dbReference>
<dbReference type="InterPro" id="IPR000685">
    <property type="entry name" value="RuBisCO_lsu_C"/>
</dbReference>
<dbReference type="InterPro" id="IPR036376">
    <property type="entry name" value="RuBisCO_lsu_C_sf"/>
</dbReference>
<dbReference type="InterPro" id="IPR017443">
    <property type="entry name" value="RuBisCO_lsu_fd_N"/>
</dbReference>
<dbReference type="InterPro" id="IPR036422">
    <property type="entry name" value="RuBisCO_lsu_N_sf"/>
</dbReference>
<dbReference type="InterPro" id="IPR020888">
    <property type="entry name" value="RuBisCO_lsuI"/>
</dbReference>
<dbReference type="NCBIfam" id="NF003252">
    <property type="entry name" value="PRK04208.1"/>
    <property type="match status" value="1"/>
</dbReference>
<dbReference type="PANTHER" id="PTHR42704">
    <property type="entry name" value="RIBULOSE BISPHOSPHATE CARBOXYLASE"/>
    <property type="match status" value="1"/>
</dbReference>
<dbReference type="PANTHER" id="PTHR42704:SF16">
    <property type="entry name" value="RIBULOSE BISPHOSPHATE CARBOXYLASE LARGE CHAIN"/>
    <property type="match status" value="1"/>
</dbReference>
<dbReference type="Pfam" id="PF00016">
    <property type="entry name" value="RuBisCO_large"/>
    <property type="match status" value="1"/>
</dbReference>
<dbReference type="Pfam" id="PF02788">
    <property type="entry name" value="RuBisCO_large_N"/>
    <property type="match status" value="1"/>
</dbReference>
<dbReference type="SFLD" id="SFLDG01052">
    <property type="entry name" value="RuBisCO"/>
    <property type="match status" value="1"/>
</dbReference>
<dbReference type="SFLD" id="SFLDS00014">
    <property type="entry name" value="RuBisCO"/>
    <property type="match status" value="1"/>
</dbReference>
<dbReference type="SFLD" id="SFLDG00301">
    <property type="entry name" value="RuBisCO-like_proteins"/>
    <property type="match status" value="1"/>
</dbReference>
<dbReference type="SUPFAM" id="SSF51649">
    <property type="entry name" value="RuBisCo, C-terminal domain"/>
    <property type="match status" value="1"/>
</dbReference>
<dbReference type="SUPFAM" id="SSF54966">
    <property type="entry name" value="RuBisCO, large subunit, small (N-terminal) domain"/>
    <property type="match status" value="1"/>
</dbReference>
<dbReference type="PROSITE" id="PS00157">
    <property type="entry name" value="RUBISCO_LARGE"/>
    <property type="match status" value="1"/>
</dbReference>
<evidence type="ECO:0000255" key="1">
    <source>
        <dbReference type="HAMAP-Rule" id="MF_01338"/>
    </source>
</evidence>
<organism>
    <name type="scientific">Nicotiana debneyi</name>
    <name type="common">Debney's tobacco</name>
    <dbReference type="NCBI Taxonomy" id="4089"/>
    <lineage>
        <taxon>Eukaryota</taxon>
        <taxon>Viridiplantae</taxon>
        <taxon>Streptophyta</taxon>
        <taxon>Embryophyta</taxon>
        <taxon>Tracheophyta</taxon>
        <taxon>Spermatophyta</taxon>
        <taxon>Magnoliopsida</taxon>
        <taxon>eudicotyledons</taxon>
        <taxon>Gunneridae</taxon>
        <taxon>Pentapetalae</taxon>
        <taxon>asterids</taxon>
        <taxon>lamiids</taxon>
        <taxon>Solanales</taxon>
        <taxon>Solanaceae</taxon>
        <taxon>Nicotianoideae</taxon>
        <taxon>Nicotianeae</taxon>
        <taxon>Nicotiana</taxon>
    </lineage>
</organism>
<reference key="1">
    <citation type="submission" date="1995-11" db="EMBL/GenBank/DDBJ databases">
        <authorList>
            <person name="Shikanai T."/>
            <person name="Foyer C."/>
            <person name="Dulieu H."/>
            <person name="Parry M."/>
            <person name="Yokota A."/>
        </authorList>
    </citation>
    <scope>NUCLEOTIDE SEQUENCE [GENOMIC DNA]</scope>
    <source>
        <tissue>Leaf</tissue>
    </source>
</reference>
<name>RBL_NICDE</name>
<accession>P48709</accession>
<proteinExistence type="inferred from homology"/>
<keyword id="KW-0007">Acetylation</keyword>
<keyword id="KW-0113">Calvin cycle</keyword>
<keyword id="KW-0120">Carbon dioxide fixation</keyword>
<keyword id="KW-0150">Chloroplast</keyword>
<keyword id="KW-1015">Disulfide bond</keyword>
<keyword id="KW-0456">Lyase</keyword>
<keyword id="KW-0460">Magnesium</keyword>
<keyword id="KW-0479">Metal-binding</keyword>
<keyword id="KW-0488">Methylation</keyword>
<keyword id="KW-0503">Monooxygenase</keyword>
<keyword id="KW-0560">Oxidoreductase</keyword>
<keyword id="KW-0601">Photorespiration</keyword>
<keyword id="KW-0602">Photosynthesis</keyword>
<keyword id="KW-0934">Plastid</keyword>
<gene>
    <name evidence="1" type="primary">rbcL</name>
</gene>
<sequence>MSPQTETKASVGFKAGVKEYKLTYYTPEYQTKDTDILAAFRVTPQPGVPPEEAGAAVAAESSTGTWTTVWTDGLTSLDRYKGRCYRIERVVGEKDQYIAYVAYPLDLFEEGSVTNMFTSIVGNVFGFKALRALRLEDLRIPPAYVKTFQGPPHGIQVERDKLNKYGRPLLGCTIKPKLGLSAKNYGRAVYECLRGGLDFTKDDENVNSQPFMRWRDRFLFCAEALFKAQVETGEIKGHYLNATAGTCEEMIKRAVFARELGVPIVMHDYLTGGFTANTSLAHYCRDNGLLLHIHRAMHAVIDRQKNHGIHFRVLAKALRMSGGDHIHSGTVVGKLEGERDITLGFVDLLRDDFVEQDRSRGIYFTQDWVSLPGVLPVASGGIHVWHMPALTEIFGDDSVLQFGGGTLGHPWGNAPGAVANRVALEACVKARNEGRDLAQEGNQIIREASKWSPELAAACEVWKEIVFNFAAVDVLDK</sequence>